<protein>
    <recommendedName>
        <fullName>Putative A-type inclusion protein</fullName>
        <shortName>ATI</shortName>
    </recommendedName>
    <alternativeName>
        <fullName>Protein A26</fullName>
    </alternativeName>
</protein>
<reference key="1">
    <citation type="journal article" date="1990" name="Virology">
        <title>The complete DNA sequence of vaccinia virus.</title>
        <authorList>
            <person name="Goebel S.J."/>
            <person name="Johnson G.P."/>
            <person name="Perkus M.E."/>
            <person name="Davis S.W."/>
            <person name="Winslow J.P."/>
            <person name="Paoletti E."/>
        </authorList>
    </citation>
    <scope>NUCLEOTIDE SEQUENCE [LARGE SCALE GENOMIC DNA]</scope>
</reference>
<reference key="2">
    <citation type="journal article" date="1990" name="Virology">
        <title>Appendix to 'The complete DNA sequence of vaccinia virus'.</title>
        <authorList>
            <person name="Goebel S.J."/>
            <person name="Johnson G.P."/>
            <person name="Perkus M.E."/>
            <person name="Davis S.W."/>
            <person name="Winslow J.P."/>
            <person name="Paoletti E."/>
        </authorList>
    </citation>
    <scope>NUCLEOTIDE SEQUENCE [LARGE SCALE GENOMIC DNA]</scope>
</reference>
<organism>
    <name type="scientific">Vaccinia virus (strain Copenhagen)</name>
    <name type="common">VACV</name>
    <dbReference type="NCBI Taxonomy" id="10249"/>
    <lineage>
        <taxon>Viruses</taxon>
        <taxon>Varidnaviria</taxon>
        <taxon>Bamfordvirae</taxon>
        <taxon>Nucleocytoviricota</taxon>
        <taxon>Pokkesviricetes</taxon>
        <taxon>Chitovirales</taxon>
        <taxon>Poxviridae</taxon>
        <taxon>Chordopoxvirinae</taxon>
        <taxon>Orthopoxvirus</taxon>
        <taxon>Vaccinia virus</taxon>
    </lineage>
</organism>
<sequence>MANIINLWNGIVPTVQDVNVASITAFKSMIDETWDKKIEANTCISRKHRNIIHEVIRDFMKAYPKMDENRKSPLGAPMQWLTQYYILKNEYHKTMLAYDNGSLNTKFKTLNIYMITNVGQYILYIVFCIISGKNHDGTPYIYDSEITSNDKNLINERIKYACKQILHGQLTIALRIRNKFMFIGSPMYLWFNVNGSQRRMKAEREIARKNCGGNPCERELKSERSNVKRLEYQLDAEKEKVKFYKRELERDRYLSSRYLTSSSDPHEKPLPNYTFPRIKNVSPLTTEATGSVEVAPPSTDVTEPISDVTPSVDVEPEHPPAF</sequence>
<proteinExistence type="inferred from homology"/>
<evidence type="ECO:0000256" key="1">
    <source>
        <dbReference type="SAM" id="MobiDB-lite"/>
    </source>
</evidence>
<evidence type="ECO:0000305" key="2"/>
<feature type="chain" id="PRO_0000099277" description="Putative A-type inclusion protein">
    <location>
        <begin position="1"/>
        <end position="322"/>
    </location>
</feature>
<feature type="region of interest" description="Disordered" evidence="1">
    <location>
        <begin position="284"/>
        <end position="322"/>
    </location>
</feature>
<dbReference type="EMBL" id="M35027">
    <property type="protein sequence ID" value="AAA48151.1"/>
    <property type="molecule type" value="Genomic_DNA"/>
</dbReference>
<dbReference type="PIR" id="A42520">
    <property type="entry name" value="WMVZ1U"/>
</dbReference>
<dbReference type="SMR" id="P21114"/>
<dbReference type="IntAct" id="P21114">
    <property type="interactions" value="1"/>
</dbReference>
<dbReference type="MINT" id="P21114"/>
<dbReference type="Proteomes" id="UP000008269">
    <property type="component" value="Segment"/>
</dbReference>
<dbReference type="InterPro" id="IPR009285">
    <property type="entry name" value="Poxvirus_A26L"/>
</dbReference>
<dbReference type="Pfam" id="PF06086">
    <property type="entry name" value="Pox_A30L_A26L"/>
    <property type="match status" value="1"/>
</dbReference>
<name>A26_VACCC</name>
<comment type="function">
    <text>Encodes a truncated version of poxvirus A26 protein.</text>
</comment>
<comment type="similarity">
    <text evidence="2">Belongs to the chordopoxvirinae A26 protein family.</text>
</comment>
<organismHost>
    <name type="scientific">Homo sapiens</name>
    <name type="common">Human</name>
    <dbReference type="NCBI Taxonomy" id="9606"/>
</organismHost>
<keyword id="KW-1185">Reference proteome</keyword>
<accession>P21114</accession>
<gene>
    <name type="ORF">A26L</name>
</gene>